<feature type="chain" id="PRO_1000197814" description="UPF0173 metal-dependent hydrolase Mnod_3315">
    <location>
        <begin position="1"/>
        <end position="236"/>
    </location>
</feature>
<proteinExistence type="inferred from homology"/>
<evidence type="ECO:0000255" key="1">
    <source>
        <dbReference type="HAMAP-Rule" id="MF_00457"/>
    </source>
</evidence>
<comment type="similarity">
    <text evidence="1">Belongs to the UPF0173 family.</text>
</comment>
<gene>
    <name type="ordered locus">Mnod_3315</name>
</gene>
<organism>
    <name type="scientific">Methylobacterium nodulans (strain LMG 21967 / CNCM I-2342 / ORS 2060)</name>
    <dbReference type="NCBI Taxonomy" id="460265"/>
    <lineage>
        <taxon>Bacteria</taxon>
        <taxon>Pseudomonadati</taxon>
        <taxon>Pseudomonadota</taxon>
        <taxon>Alphaproteobacteria</taxon>
        <taxon>Hyphomicrobiales</taxon>
        <taxon>Methylobacteriaceae</taxon>
        <taxon>Methylobacterium</taxon>
    </lineage>
</organism>
<sequence>MRITWFGHSAFRLDFGASHVLIDPFFTGNPAFEGGDAARASAVEGATHILITHGHGDHVGDTLAVAGETGAKVVTNYDLCMWLASKGLTNFDPMNTGGTTDQGAFRVTLVHADHSAGMSEAGVTVPLGLPNGIIVRAAGEPTVYHMGDTDIFGDMALIQEIYRPDVLMVPIGDRFTMGAETAALAVRKFFAPKAVIPCHYGSFPIIAPSADAFVSALDGSGIQVVVPHKGTAVTIP</sequence>
<protein>
    <recommendedName>
        <fullName evidence="1">UPF0173 metal-dependent hydrolase Mnod_3315</fullName>
    </recommendedName>
</protein>
<name>Y3315_METNO</name>
<accession>B8IL50</accession>
<dbReference type="EMBL" id="CP001349">
    <property type="protein sequence ID" value="ACL58238.1"/>
    <property type="molecule type" value="Genomic_DNA"/>
</dbReference>
<dbReference type="RefSeq" id="WP_015929901.1">
    <property type="nucleotide sequence ID" value="NC_011894.1"/>
</dbReference>
<dbReference type="SMR" id="B8IL50"/>
<dbReference type="STRING" id="460265.Mnod_3315"/>
<dbReference type="KEGG" id="mno:Mnod_3315"/>
<dbReference type="eggNOG" id="COG2220">
    <property type="taxonomic scope" value="Bacteria"/>
</dbReference>
<dbReference type="HOGENOM" id="CLU_070010_4_0_5"/>
<dbReference type="OrthoDB" id="9789133at2"/>
<dbReference type="Proteomes" id="UP000008207">
    <property type="component" value="Chromosome"/>
</dbReference>
<dbReference type="GO" id="GO:0016787">
    <property type="term" value="F:hydrolase activity"/>
    <property type="evidence" value="ECO:0007669"/>
    <property type="project" value="UniProtKB-UniRule"/>
</dbReference>
<dbReference type="Gene3D" id="3.60.15.10">
    <property type="entry name" value="Ribonuclease Z/Hydroxyacylglutathione hydrolase-like"/>
    <property type="match status" value="1"/>
</dbReference>
<dbReference type="HAMAP" id="MF_00457">
    <property type="entry name" value="UPF0173"/>
    <property type="match status" value="1"/>
</dbReference>
<dbReference type="InterPro" id="IPR001279">
    <property type="entry name" value="Metallo-B-lactamas"/>
</dbReference>
<dbReference type="InterPro" id="IPR036866">
    <property type="entry name" value="RibonucZ/Hydroxyglut_hydro"/>
</dbReference>
<dbReference type="InterPro" id="IPR022877">
    <property type="entry name" value="UPF0173"/>
</dbReference>
<dbReference type="InterPro" id="IPR050114">
    <property type="entry name" value="UPF0173_UPF0282_UlaG_hydrolase"/>
</dbReference>
<dbReference type="NCBIfam" id="NF001911">
    <property type="entry name" value="PRK00685.1"/>
    <property type="match status" value="1"/>
</dbReference>
<dbReference type="PANTHER" id="PTHR43546:SF3">
    <property type="entry name" value="UPF0173 METAL-DEPENDENT HYDROLASE MJ1163"/>
    <property type="match status" value="1"/>
</dbReference>
<dbReference type="PANTHER" id="PTHR43546">
    <property type="entry name" value="UPF0173 METAL-DEPENDENT HYDROLASE MJ1163-RELATED"/>
    <property type="match status" value="1"/>
</dbReference>
<dbReference type="Pfam" id="PF13483">
    <property type="entry name" value="Lactamase_B_3"/>
    <property type="match status" value="1"/>
</dbReference>
<dbReference type="SMART" id="SM00849">
    <property type="entry name" value="Lactamase_B"/>
    <property type="match status" value="1"/>
</dbReference>
<dbReference type="SUPFAM" id="SSF56281">
    <property type="entry name" value="Metallo-hydrolase/oxidoreductase"/>
    <property type="match status" value="1"/>
</dbReference>
<keyword id="KW-0378">Hydrolase</keyword>
<keyword id="KW-1185">Reference proteome</keyword>
<reference key="1">
    <citation type="submission" date="2009-01" db="EMBL/GenBank/DDBJ databases">
        <title>Complete sequence of chromosome of Methylobacterium nodulans ORS 2060.</title>
        <authorList>
            <consortium name="US DOE Joint Genome Institute"/>
            <person name="Lucas S."/>
            <person name="Copeland A."/>
            <person name="Lapidus A."/>
            <person name="Glavina del Rio T."/>
            <person name="Dalin E."/>
            <person name="Tice H."/>
            <person name="Bruce D."/>
            <person name="Goodwin L."/>
            <person name="Pitluck S."/>
            <person name="Sims D."/>
            <person name="Brettin T."/>
            <person name="Detter J.C."/>
            <person name="Han C."/>
            <person name="Larimer F."/>
            <person name="Land M."/>
            <person name="Hauser L."/>
            <person name="Kyrpides N."/>
            <person name="Ivanova N."/>
            <person name="Marx C.J."/>
            <person name="Richardson P."/>
        </authorList>
    </citation>
    <scope>NUCLEOTIDE SEQUENCE [LARGE SCALE GENOMIC DNA]</scope>
    <source>
        <strain>LMG 21967 / CNCM I-2342 / ORS 2060</strain>
    </source>
</reference>